<comment type="function">
    <text evidence="1">Part of the twin-arginine translocation (Tat) system that transports large folded proteins containing a characteristic twin-arginine motif in their signal peptide across membranes. Together with TatC, TatB is part of a receptor directly interacting with Tat signal peptides. TatB may form an oligomeric binding site that transiently accommodates folded Tat precursor proteins before their translocation.</text>
</comment>
<comment type="subunit">
    <text evidence="1">The Tat system comprises two distinct complexes: a TatABC complex, containing multiple copies of TatA, TatB and TatC subunits, and a separate TatA complex, containing only TatA subunits. Substrates initially bind to the TatABC complex, which probably triggers association of the separate TatA complex to form the active translocon.</text>
</comment>
<comment type="subcellular location">
    <subcellularLocation>
        <location evidence="1">Cell membrane</location>
        <topology evidence="1">Single-pass membrane protein</topology>
    </subcellularLocation>
</comment>
<comment type="similarity">
    <text evidence="1">Belongs to the TatB family.</text>
</comment>
<accession>A1KI12</accession>
<gene>
    <name evidence="1" type="primary">tatB</name>
    <name type="ordered locus">BCG_1284</name>
</gene>
<proteinExistence type="inferred from homology"/>
<sequence>MFANIGWGEMLVLVMVGLVVLGPERLPGAIRWAASALRQARDYLSGVTSQLREDIGPEFDDLRGHLGELQKLRGMTPRAALTKHLLDGDDSLFTGDFDRPTPKKPDAAGSAGPDATEQIGAGPIPFDSDAT</sequence>
<name>TATB_MYCBP</name>
<dbReference type="EMBL" id="AM408590">
    <property type="protein sequence ID" value="CAL71271.1"/>
    <property type="molecule type" value="Genomic_DNA"/>
</dbReference>
<dbReference type="RefSeq" id="WP_003406260.1">
    <property type="nucleotide sequence ID" value="NC_008769.1"/>
</dbReference>
<dbReference type="SMR" id="A1KI12"/>
<dbReference type="GeneID" id="45425194"/>
<dbReference type="KEGG" id="mbb:BCG_1284"/>
<dbReference type="HOGENOM" id="CLU_086034_2_0_11"/>
<dbReference type="Proteomes" id="UP000001472">
    <property type="component" value="Chromosome"/>
</dbReference>
<dbReference type="GO" id="GO:0033281">
    <property type="term" value="C:TAT protein transport complex"/>
    <property type="evidence" value="ECO:0007669"/>
    <property type="project" value="UniProtKB-UniRule"/>
</dbReference>
<dbReference type="GO" id="GO:0008320">
    <property type="term" value="F:protein transmembrane transporter activity"/>
    <property type="evidence" value="ECO:0007669"/>
    <property type="project" value="UniProtKB-UniRule"/>
</dbReference>
<dbReference type="GO" id="GO:0043953">
    <property type="term" value="P:protein transport by the Tat complex"/>
    <property type="evidence" value="ECO:0007669"/>
    <property type="project" value="UniProtKB-UniRule"/>
</dbReference>
<dbReference type="Gene3D" id="1.20.5.3310">
    <property type="match status" value="1"/>
</dbReference>
<dbReference type="HAMAP" id="MF_00237">
    <property type="entry name" value="TatB"/>
    <property type="match status" value="1"/>
</dbReference>
<dbReference type="InterPro" id="IPR003369">
    <property type="entry name" value="TatA/B/E"/>
</dbReference>
<dbReference type="InterPro" id="IPR018448">
    <property type="entry name" value="TatB"/>
</dbReference>
<dbReference type="NCBIfam" id="TIGR01410">
    <property type="entry name" value="tatB"/>
    <property type="match status" value="1"/>
</dbReference>
<dbReference type="Pfam" id="PF02416">
    <property type="entry name" value="TatA_B_E"/>
    <property type="match status" value="1"/>
</dbReference>
<dbReference type="PRINTS" id="PR01506">
    <property type="entry name" value="TATBPROTEIN"/>
</dbReference>
<protein>
    <recommendedName>
        <fullName evidence="1">Sec-independent protein translocase protein TatB</fullName>
    </recommendedName>
</protein>
<keyword id="KW-1003">Cell membrane</keyword>
<keyword id="KW-0472">Membrane</keyword>
<keyword id="KW-0653">Protein transport</keyword>
<keyword id="KW-0811">Translocation</keyword>
<keyword id="KW-0812">Transmembrane</keyword>
<keyword id="KW-1133">Transmembrane helix</keyword>
<keyword id="KW-0813">Transport</keyword>
<evidence type="ECO:0000255" key="1">
    <source>
        <dbReference type="HAMAP-Rule" id="MF_00237"/>
    </source>
</evidence>
<evidence type="ECO:0000256" key="2">
    <source>
        <dbReference type="SAM" id="MobiDB-lite"/>
    </source>
</evidence>
<feature type="chain" id="PRO_0000301186" description="Sec-independent protein translocase protein TatB">
    <location>
        <begin position="1"/>
        <end position="131"/>
    </location>
</feature>
<feature type="transmembrane region" description="Helical" evidence="1">
    <location>
        <begin position="2"/>
        <end position="22"/>
    </location>
</feature>
<feature type="region of interest" description="Disordered" evidence="2">
    <location>
        <begin position="90"/>
        <end position="131"/>
    </location>
</feature>
<feature type="compositionally biased region" description="Basic and acidic residues" evidence="2">
    <location>
        <begin position="96"/>
        <end position="106"/>
    </location>
</feature>
<organism>
    <name type="scientific">Mycobacterium bovis (strain BCG / Pasteur 1173P2)</name>
    <dbReference type="NCBI Taxonomy" id="410289"/>
    <lineage>
        <taxon>Bacteria</taxon>
        <taxon>Bacillati</taxon>
        <taxon>Actinomycetota</taxon>
        <taxon>Actinomycetes</taxon>
        <taxon>Mycobacteriales</taxon>
        <taxon>Mycobacteriaceae</taxon>
        <taxon>Mycobacterium</taxon>
        <taxon>Mycobacterium tuberculosis complex</taxon>
    </lineage>
</organism>
<reference key="1">
    <citation type="journal article" date="2007" name="Proc. Natl. Acad. Sci. U.S.A.">
        <title>Genome plasticity of BCG and impact on vaccine efficacy.</title>
        <authorList>
            <person name="Brosch R."/>
            <person name="Gordon S.V."/>
            <person name="Garnier T."/>
            <person name="Eiglmeier K."/>
            <person name="Frigui W."/>
            <person name="Valenti P."/>
            <person name="Dos Santos S."/>
            <person name="Duthoy S."/>
            <person name="Lacroix C."/>
            <person name="Garcia-Pelayo C."/>
            <person name="Inwald J.K."/>
            <person name="Golby P."/>
            <person name="Garcia J.N."/>
            <person name="Hewinson R.G."/>
            <person name="Behr M.A."/>
            <person name="Quail M.A."/>
            <person name="Churcher C."/>
            <person name="Barrell B.G."/>
            <person name="Parkhill J."/>
            <person name="Cole S.T."/>
        </authorList>
    </citation>
    <scope>NUCLEOTIDE SEQUENCE [LARGE SCALE GENOMIC DNA]</scope>
    <source>
        <strain>BCG / Pasteur 1173P2</strain>
    </source>
</reference>